<comment type="function">
    <text evidence="1">An accessory protein needed during the final step in the assembly of 30S ribosomal subunit, possibly for assembly of the head region. Essential for efficient processing of 16S rRNA. May be needed both before and after RbfA during the maturation of 16S rRNA. It has affinity for free ribosomal 30S subunits but not for 70S ribosomes.</text>
</comment>
<comment type="subunit">
    <text evidence="1">Binds ribosomal protein uS19.</text>
</comment>
<comment type="subcellular location">
    <subcellularLocation>
        <location evidence="1">Cytoplasm</location>
    </subcellularLocation>
</comment>
<comment type="domain">
    <text evidence="1">The PRC barrel domain binds ribosomal protein uS19.</text>
</comment>
<comment type="similarity">
    <text evidence="1">Belongs to the RimM family.</text>
</comment>
<gene>
    <name evidence="1" type="primary">rimM</name>
    <name type="ordered locus">Tcr_0648</name>
</gene>
<sequence>MMSSKQDEKIILGQINGIYGVQGWVKIFSHTDPRQNILSYSPWLVKVKNEWRTFQVEEGRAQQGGKSVVAKLEGIDDRDLAREYIGCEIAILPEQLPATEEGFYWMQLIGCQVTSVEGEDLGQVTEIVETGAHDVLRVEKQSDAGLVSTLIPFVMETFILDVDVESKQIQVDWQLEDATES</sequence>
<feature type="chain" id="PRO_0000244184" description="Ribosome maturation factor RimM">
    <location>
        <begin position="1"/>
        <end position="181"/>
    </location>
</feature>
<feature type="domain" description="PRC barrel" evidence="1">
    <location>
        <begin position="100"/>
        <end position="177"/>
    </location>
</feature>
<name>RIMM_HYDCU</name>
<organism>
    <name type="scientific">Hydrogenovibrio crunogenus (strain DSM 25203 / XCL-2)</name>
    <name type="common">Thiomicrospira crunogena</name>
    <dbReference type="NCBI Taxonomy" id="317025"/>
    <lineage>
        <taxon>Bacteria</taxon>
        <taxon>Pseudomonadati</taxon>
        <taxon>Pseudomonadota</taxon>
        <taxon>Gammaproteobacteria</taxon>
        <taxon>Thiotrichales</taxon>
        <taxon>Piscirickettsiaceae</taxon>
        <taxon>Hydrogenovibrio</taxon>
    </lineage>
</organism>
<proteinExistence type="inferred from homology"/>
<keyword id="KW-0143">Chaperone</keyword>
<keyword id="KW-0963">Cytoplasm</keyword>
<keyword id="KW-0690">Ribosome biogenesis</keyword>
<keyword id="KW-0698">rRNA processing</keyword>
<reference key="1">
    <citation type="journal article" date="2006" name="PLoS Biol.">
        <title>The genome of deep-sea vent chemolithoautotroph Thiomicrospira crunogena XCL-2.</title>
        <authorList>
            <person name="Scott K.M."/>
            <person name="Sievert S.M."/>
            <person name="Abril F.N."/>
            <person name="Ball L.A."/>
            <person name="Barrett C.J."/>
            <person name="Blake R.A."/>
            <person name="Boller A.J."/>
            <person name="Chain P.S.G."/>
            <person name="Clark J.A."/>
            <person name="Davis C.R."/>
            <person name="Detter C."/>
            <person name="Do K.F."/>
            <person name="Dobrinski K.P."/>
            <person name="Faza B.I."/>
            <person name="Fitzpatrick K.A."/>
            <person name="Freyermuth S.K."/>
            <person name="Harmer T.L."/>
            <person name="Hauser L.J."/>
            <person name="Huegler M."/>
            <person name="Kerfeld C.A."/>
            <person name="Klotz M.G."/>
            <person name="Kong W.W."/>
            <person name="Land M."/>
            <person name="Lapidus A."/>
            <person name="Larimer F.W."/>
            <person name="Longo D.L."/>
            <person name="Lucas S."/>
            <person name="Malfatti S.A."/>
            <person name="Massey S.E."/>
            <person name="Martin D.D."/>
            <person name="McCuddin Z."/>
            <person name="Meyer F."/>
            <person name="Moore J.L."/>
            <person name="Ocampo L.H. Jr."/>
            <person name="Paul J.H."/>
            <person name="Paulsen I.T."/>
            <person name="Reep D.K."/>
            <person name="Ren Q."/>
            <person name="Ross R.L."/>
            <person name="Sato P.Y."/>
            <person name="Thomas P."/>
            <person name="Tinkham L.E."/>
            <person name="Zeruth G.T."/>
        </authorList>
    </citation>
    <scope>NUCLEOTIDE SEQUENCE [LARGE SCALE GENOMIC DNA]</scope>
    <source>
        <strain>DSM 25203 / XCL-2</strain>
    </source>
</reference>
<evidence type="ECO:0000255" key="1">
    <source>
        <dbReference type="HAMAP-Rule" id="MF_00014"/>
    </source>
</evidence>
<accession>Q31HX9</accession>
<dbReference type="EMBL" id="CP000109">
    <property type="protein sequence ID" value="ABB41244.1"/>
    <property type="molecule type" value="Genomic_DNA"/>
</dbReference>
<dbReference type="SMR" id="Q31HX9"/>
<dbReference type="STRING" id="317025.Tcr_0648"/>
<dbReference type="KEGG" id="tcx:Tcr_0648"/>
<dbReference type="eggNOG" id="COG0806">
    <property type="taxonomic scope" value="Bacteria"/>
</dbReference>
<dbReference type="HOGENOM" id="CLU_077636_1_0_6"/>
<dbReference type="OrthoDB" id="9783509at2"/>
<dbReference type="GO" id="GO:0005737">
    <property type="term" value="C:cytoplasm"/>
    <property type="evidence" value="ECO:0007669"/>
    <property type="project" value="UniProtKB-SubCell"/>
</dbReference>
<dbReference type="GO" id="GO:0005840">
    <property type="term" value="C:ribosome"/>
    <property type="evidence" value="ECO:0007669"/>
    <property type="project" value="InterPro"/>
</dbReference>
<dbReference type="GO" id="GO:0043022">
    <property type="term" value="F:ribosome binding"/>
    <property type="evidence" value="ECO:0007669"/>
    <property type="project" value="InterPro"/>
</dbReference>
<dbReference type="GO" id="GO:0042274">
    <property type="term" value="P:ribosomal small subunit biogenesis"/>
    <property type="evidence" value="ECO:0007669"/>
    <property type="project" value="UniProtKB-UniRule"/>
</dbReference>
<dbReference type="GO" id="GO:0006364">
    <property type="term" value="P:rRNA processing"/>
    <property type="evidence" value="ECO:0007669"/>
    <property type="project" value="UniProtKB-UniRule"/>
</dbReference>
<dbReference type="Gene3D" id="2.30.30.240">
    <property type="entry name" value="PRC-barrel domain"/>
    <property type="match status" value="1"/>
</dbReference>
<dbReference type="Gene3D" id="2.40.30.60">
    <property type="entry name" value="RimM"/>
    <property type="match status" value="1"/>
</dbReference>
<dbReference type="HAMAP" id="MF_00014">
    <property type="entry name" value="Ribosome_mat_RimM"/>
    <property type="match status" value="1"/>
</dbReference>
<dbReference type="InterPro" id="IPR011033">
    <property type="entry name" value="PRC_barrel-like_sf"/>
</dbReference>
<dbReference type="InterPro" id="IPR056792">
    <property type="entry name" value="PRC_RimM"/>
</dbReference>
<dbReference type="InterPro" id="IPR011961">
    <property type="entry name" value="RimM"/>
</dbReference>
<dbReference type="InterPro" id="IPR002676">
    <property type="entry name" value="RimM_N"/>
</dbReference>
<dbReference type="InterPro" id="IPR036976">
    <property type="entry name" value="RimM_N_sf"/>
</dbReference>
<dbReference type="InterPro" id="IPR009000">
    <property type="entry name" value="Transl_B-barrel_sf"/>
</dbReference>
<dbReference type="NCBIfam" id="TIGR02273">
    <property type="entry name" value="16S_RimM"/>
    <property type="match status" value="1"/>
</dbReference>
<dbReference type="PANTHER" id="PTHR33692">
    <property type="entry name" value="RIBOSOME MATURATION FACTOR RIMM"/>
    <property type="match status" value="1"/>
</dbReference>
<dbReference type="PANTHER" id="PTHR33692:SF1">
    <property type="entry name" value="RIBOSOME MATURATION FACTOR RIMM"/>
    <property type="match status" value="1"/>
</dbReference>
<dbReference type="Pfam" id="PF24986">
    <property type="entry name" value="PRC_RimM"/>
    <property type="match status" value="1"/>
</dbReference>
<dbReference type="Pfam" id="PF01782">
    <property type="entry name" value="RimM"/>
    <property type="match status" value="1"/>
</dbReference>
<dbReference type="SUPFAM" id="SSF50346">
    <property type="entry name" value="PRC-barrel domain"/>
    <property type="match status" value="1"/>
</dbReference>
<dbReference type="SUPFAM" id="SSF50447">
    <property type="entry name" value="Translation proteins"/>
    <property type="match status" value="1"/>
</dbReference>
<protein>
    <recommendedName>
        <fullName evidence="1">Ribosome maturation factor RimM</fullName>
    </recommendedName>
</protein>